<gene>
    <name evidence="1" type="primary">pheS</name>
    <name type="ordered locus">BMEA_A2182</name>
</gene>
<name>SYFA_BRUMB</name>
<keyword id="KW-0030">Aminoacyl-tRNA synthetase</keyword>
<keyword id="KW-0067">ATP-binding</keyword>
<keyword id="KW-0963">Cytoplasm</keyword>
<keyword id="KW-0436">Ligase</keyword>
<keyword id="KW-0460">Magnesium</keyword>
<keyword id="KW-0479">Metal-binding</keyword>
<keyword id="KW-0547">Nucleotide-binding</keyword>
<keyword id="KW-0648">Protein biosynthesis</keyword>
<comment type="catalytic activity">
    <reaction evidence="1">
        <text>tRNA(Phe) + L-phenylalanine + ATP = L-phenylalanyl-tRNA(Phe) + AMP + diphosphate + H(+)</text>
        <dbReference type="Rhea" id="RHEA:19413"/>
        <dbReference type="Rhea" id="RHEA-COMP:9668"/>
        <dbReference type="Rhea" id="RHEA-COMP:9699"/>
        <dbReference type="ChEBI" id="CHEBI:15378"/>
        <dbReference type="ChEBI" id="CHEBI:30616"/>
        <dbReference type="ChEBI" id="CHEBI:33019"/>
        <dbReference type="ChEBI" id="CHEBI:58095"/>
        <dbReference type="ChEBI" id="CHEBI:78442"/>
        <dbReference type="ChEBI" id="CHEBI:78531"/>
        <dbReference type="ChEBI" id="CHEBI:456215"/>
        <dbReference type="EC" id="6.1.1.20"/>
    </reaction>
</comment>
<comment type="cofactor">
    <cofactor evidence="1">
        <name>Mg(2+)</name>
        <dbReference type="ChEBI" id="CHEBI:18420"/>
    </cofactor>
    <text evidence="1">Binds 2 magnesium ions per tetramer.</text>
</comment>
<comment type="subunit">
    <text evidence="1">Tetramer of two alpha and two beta subunits.</text>
</comment>
<comment type="subcellular location">
    <subcellularLocation>
        <location evidence="1">Cytoplasm</location>
    </subcellularLocation>
</comment>
<comment type="similarity">
    <text evidence="1">Belongs to the class-II aminoacyl-tRNA synthetase family. Phe-tRNA synthetase alpha subunit type 1 subfamily.</text>
</comment>
<evidence type="ECO:0000255" key="1">
    <source>
        <dbReference type="HAMAP-Rule" id="MF_00281"/>
    </source>
</evidence>
<protein>
    <recommendedName>
        <fullName evidence="1">Phenylalanine--tRNA ligase alpha subunit</fullName>
        <ecNumber evidence="1">6.1.1.20</ecNumber>
    </recommendedName>
    <alternativeName>
        <fullName evidence="1">Phenylalanyl-tRNA synthetase alpha subunit</fullName>
        <shortName evidence="1">PheRS</shortName>
    </alternativeName>
</protein>
<accession>C0RG06</accession>
<sequence>MSDLEQLERQILEDIAAAVDEQGIEAVRVAALGKKGTVSEKLKTLGGMSPEERQMQGPAINGLKNRVTEALSERRTELRKAAVAARLEREKVDVTLPVRESAASRGRIHPISQVIDEITAIFADMGFSIAEGPDIETDYYNFTALNFPEGHPAREMHDTFFFNPDEKGERKLLRTHTSPVQVHTMEKFAAMRDKEGRDEPIRIVIPGKTYRMDSDATHSPMFHQVEGLVVDKSANVANMKWVLEEFCKAFFEVPSVKMRMRPSFFPFTEPSVEVDIQCDRSGPHVKFGEGNDWLEILGCGMVHPNVLRMSGYDPEVYQGFAWGMGIDRIAMLKYGMPDLRAFFDADVRWIEHYGFRPLDIPTLFGGLSA</sequence>
<organism>
    <name type="scientific">Brucella melitensis biotype 2 (strain ATCC 23457)</name>
    <dbReference type="NCBI Taxonomy" id="546272"/>
    <lineage>
        <taxon>Bacteria</taxon>
        <taxon>Pseudomonadati</taxon>
        <taxon>Pseudomonadota</taxon>
        <taxon>Alphaproteobacteria</taxon>
        <taxon>Hyphomicrobiales</taxon>
        <taxon>Brucellaceae</taxon>
        <taxon>Brucella/Ochrobactrum group</taxon>
        <taxon>Brucella</taxon>
    </lineage>
</organism>
<reference key="1">
    <citation type="submission" date="2009-03" db="EMBL/GenBank/DDBJ databases">
        <title>Brucella melitensis ATCC 23457 whole genome shotgun sequencing project.</title>
        <authorList>
            <person name="Setubal J.C."/>
            <person name="Boyle S."/>
            <person name="Crasta O.R."/>
            <person name="Gillespie J.J."/>
            <person name="Kenyon R.W."/>
            <person name="Lu J."/>
            <person name="Mane S."/>
            <person name="Nagrani S."/>
            <person name="Shallom J.M."/>
            <person name="Shallom S."/>
            <person name="Shukla M."/>
            <person name="Snyder E.E."/>
            <person name="Sobral B.W."/>
            <person name="Wattam A.R."/>
            <person name="Will R."/>
            <person name="Williams K."/>
            <person name="Yoo H."/>
            <person name="Munk C."/>
            <person name="Tapia R."/>
            <person name="Han C."/>
            <person name="Detter J.C."/>
            <person name="Bruce D."/>
            <person name="Brettin T.S."/>
        </authorList>
    </citation>
    <scope>NUCLEOTIDE SEQUENCE [LARGE SCALE GENOMIC DNA]</scope>
    <source>
        <strain>ATCC 23457</strain>
    </source>
</reference>
<proteinExistence type="inferred from homology"/>
<feature type="chain" id="PRO_1000199301" description="Phenylalanine--tRNA ligase alpha subunit">
    <location>
        <begin position="1"/>
        <end position="369"/>
    </location>
</feature>
<feature type="binding site" evidence="1">
    <location>
        <position position="269"/>
    </location>
    <ligand>
        <name>Mg(2+)</name>
        <dbReference type="ChEBI" id="CHEBI:18420"/>
        <note>shared with beta subunit</note>
    </ligand>
</feature>
<dbReference type="EC" id="6.1.1.20" evidence="1"/>
<dbReference type="EMBL" id="CP001488">
    <property type="protein sequence ID" value="ACO01828.1"/>
    <property type="molecule type" value="Genomic_DNA"/>
</dbReference>
<dbReference type="RefSeq" id="WP_002967041.1">
    <property type="nucleotide sequence ID" value="NC_012441.1"/>
</dbReference>
<dbReference type="SMR" id="C0RG06"/>
<dbReference type="GeneID" id="97534620"/>
<dbReference type="KEGG" id="bmi:BMEA_A2182"/>
<dbReference type="HOGENOM" id="CLU_025086_0_1_5"/>
<dbReference type="Proteomes" id="UP000001748">
    <property type="component" value="Chromosome I"/>
</dbReference>
<dbReference type="GO" id="GO:0005737">
    <property type="term" value="C:cytoplasm"/>
    <property type="evidence" value="ECO:0007669"/>
    <property type="project" value="UniProtKB-SubCell"/>
</dbReference>
<dbReference type="GO" id="GO:0005524">
    <property type="term" value="F:ATP binding"/>
    <property type="evidence" value="ECO:0007669"/>
    <property type="project" value="UniProtKB-UniRule"/>
</dbReference>
<dbReference type="GO" id="GO:0000287">
    <property type="term" value="F:magnesium ion binding"/>
    <property type="evidence" value="ECO:0007669"/>
    <property type="project" value="UniProtKB-UniRule"/>
</dbReference>
<dbReference type="GO" id="GO:0004826">
    <property type="term" value="F:phenylalanine-tRNA ligase activity"/>
    <property type="evidence" value="ECO:0007669"/>
    <property type="project" value="UniProtKB-UniRule"/>
</dbReference>
<dbReference type="GO" id="GO:0000049">
    <property type="term" value="F:tRNA binding"/>
    <property type="evidence" value="ECO:0007669"/>
    <property type="project" value="InterPro"/>
</dbReference>
<dbReference type="GO" id="GO:0006432">
    <property type="term" value="P:phenylalanyl-tRNA aminoacylation"/>
    <property type="evidence" value="ECO:0007669"/>
    <property type="project" value="UniProtKB-UniRule"/>
</dbReference>
<dbReference type="CDD" id="cd00496">
    <property type="entry name" value="PheRS_alpha_core"/>
    <property type="match status" value="1"/>
</dbReference>
<dbReference type="FunFam" id="3.30.930.10:FF:000003">
    <property type="entry name" value="Phenylalanine--tRNA ligase alpha subunit"/>
    <property type="match status" value="1"/>
</dbReference>
<dbReference type="Gene3D" id="3.30.930.10">
    <property type="entry name" value="Bira Bifunctional Protein, Domain 2"/>
    <property type="match status" value="1"/>
</dbReference>
<dbReference type="HAMAP" id="MF_00281">
    <property type="entry name" value="Phe_tRNA_synth_alpha1"/>
    <property type="match status" value="1"/>
</dbReference>
<dbReference type="InterPro" id="IPR006195">
    <property type="entry name" value="aa-tRNA-synth_II"/>
</dbReference>
<dbReference type="InterPro" id="IPR045864">
    <property type="entry name" value="aa-tRNA-synth_II/BPL/LPL"/>
</dbReference>
<dbReference type="InterPro" id="IPR004529">
    <property type="entry name" value="Phe-tRNA-synth_IIc_asu"/>
</dbReference>
<dbReference type="InterPro" id="IPR004188">
    <property type="entry name" value="Phe-tRNA_ligase_II_N"/>
</dbReference>
<dbReference type="InterPro" id="IPR022911">
    <property type="entry name" value="Phe_tRNA_ligase_alpha1_bac"/>
</dbReference>
<dbReference type="InterPro" id="IPR002319">
    <property type="entry name" value="Phenylalanyl-tRNA_Synthase"/>
</dbReference>
<dbReference type="InterPro" id="IPR010978">
    <property type="entry name" value="tRNA-bd_arm"/>
</dbReference>
<dbReference type="NCBIfam" id="TIGR00468">
    <property type="entry name" value="pheS"/>
    <property type="match status" value="1"/>
</dbReference>
<dbReference type="PANTHER" id="PTHR11538:SF41">
    <property type="entry name" value="PHENYLALANINE--TRNA LIGASE, MITOCHONDRIAL"/>
    <property type="match status" value="1"/>
</dbReference>
<dbReference type="PANTHER" id="PTHR11538">
    <property type="entry name" value="PHENYLALANYL-TRNA SYNTHETASE"/>
    <property type="match status" value="1"/>
</dbReference>
<dbReference type="Pfam" id="PF02912">
    <property type="entry name" value="Phe_tRNA-synt_N"/>
    <property type="match status" value="1"/>
</dbReference>
<dbReference type="Pfam" id="PF01409">
    <property type="entry name" value="tRNA-synt_2d"/>
    <property type="match status" value="1"/>
</dbReference>
<dbReference type="SUPFAM" id="SSF55681">
    <property type="entry name" value="Class II aaRS and biotin synthetases"/>
    <property type="match status" value="1"/>
</dbReference>
<dbReference type="SUPFAM" id="SSF46589">
    <property type="entry name" value="tRNA-binding arm"/>
    <property type="match status" value="1"/>
</dbReference>
<dbReference type="PROSITE" id="PS50862">
    <property type="entry name" value="AA_TRNA_LIGASE_II"/>
    <property type="match status" value="1"/>
</dbReference>